<protein>
    <recommendedName>
        <fullName evidence="1">Ketol-acid reductoisomerase (NADP(+))</fullName>
        <shortName evidence="1">KARI</shortName>
        <ecNumber evidence="1">1.1.1.86</ecNumber>
    </recommendedName>
    <alternativeName>
        <fullName evidence="1">Acetohydroxy-acid isomeroreductase</fullName>
        <shortName evidence="1">AHIR</shortName>
    </alternativeName>
    <alternativeName>
        <fullName evidence="1">Alpha-keto-beta-hydroxylacyl reductoisomerase</fullName>
    </alternativeName>
    <alternativeName>
        <fullName evidence="1">Ketol-acid reductoisomerase type 1</fullName>
    </alternativeName>
    <alternativeName>
        <fullName evidence="1">Ketol-acid reductoisomerase type I</fullName>
    </alternativeName>
</protein>
<name>ILVC_METMJ</name>
<comment type="function">
    <text evidence="1">Involved in the biosynthesis of branched-chain amino acids (BCAA). Catalyzes an alkyl-migration followed by a ketol-acid reduction of (S)-2-acetolactate (S2AL) to yield (R)-2,3-dihydroxy-isovalerate. In the isomerase reaction, S2AL is rearranged via a Mg-dependent methyl migration to produce 3-hydroxy-3-methyl-2-ketobutyrate (HMKB). In the reductase reaction, this 2-ketoacid undergoes a metal-dependent reduction by NADPH to yield (R)-2,3-dihydroxy-isovalerate.</text>
</comment>
<comment type="catalytic activity">
    <reaction evidence="1">
        <text>(2R)-2,3-dihydroxy-3-methylbutanoate + NADP(+) = (2S)-2-acetolactate + NADPH + H(+)</text>
        <dbReference type="Rhea" id="RHEA:22068"/>
        <dbReference type="ChEBI" id="CHEBI:15378"/>
        <dbReference type="ChEBI" id="CHEBI:49072"/>
        <dbReference type="ChEBI" id="CHEBI:57783"/>
        <dbReference type="ChEBI" id="CHEBI:58349"/>
        <dbReference type="ChEBI" id="CHEBI:58476"/>
        <dbReference type="EC" id="1.1.1.86"/>
    </reaction>
</comment>
<comment type="catalytic activity">
    <reaction evidence="1">
        <text>(2R,3R)-2,3-dihydroxy-3-methylpentanoate + NADP(+) = (S)-2-ethyl-2-hydroxy-3-oxobutanoate + NADPH + H(+)</text>
        <dbReference type="Rhea" id="RHEA:13493"/>
        <dbReference type="ChEBI" id="CHEBI:15378"/>
        <dbReference type="ChEBI" id="CHEBI:49256"/>
        <dbReference type="ChEBI" id="CHEBI:49258"/>
        <dbReference type="ChEBI" id="CHEBI:57783"/>
        <dbReference type="ChEBI" id="CHEBI:58349"/>
        <dbReference type="EC" id="1.1.1.86"/>
    </reaction>
</comment>
<comment type="cofactor">
    <cofactor evidence="1">
        <name>Mg(2+)</name>
        <dbReference type="ChEBI" id="CHEBI:18420"/>
    </cofactor>
    <text evidence="1">Binds 2 magnesium ions per subunit.</text>
</comment>
<comment type="pathway">
    <text evidence="1">Amino-acid biosynthesis; L-isoleucine biosynthesis; L-isoleucine from 2-oxobutanoate: step 2/4.</text>
</comment>
<comment type="pathway">
    <text evidence="1">Amino-acid biosynthesis; L-valine biosynthesis; L-valine from pyruvate: step 2/4.</text>
</comment>
<comment type="similarity">
    <text evidence="1">Belongs to the ketol-acid reductoisomerase family.</text>
</comment>
<proteinExistence type="inferred from homology"/>
<reference key="1">
    <citation type="journal article" date="2009" name="Stand. Genomic Sci.">
        <title>Complete genome sequence of Methanoculleus marisnigri Romesser et al. 1981 type strain JR1.</title>
        <authorList>
            <person name="Anderson I.J."/>
            <person name="Sieprawska-Lupa M."/>
            <person name="Lapidus A."/>
            <person name="Nolan M."/>
            <person name="Copeland A."/>
            <person name="Glavina Del Rio T."/>
            <person name="Tice H."/>
            <person name="Dalin E."/>
            <person name="Barry K."/>
            <person name="Saunders E."/>
            <person name="Han C."/>
            <person name="Brettin T."/>
            <person name="Detter J.C."/>
            <person name="Bruce D."/>
            <person name="Mikhailova N."/>
            <person name="Pitluck S."/>
            <person name="Hauser L."/>
            <person name="Land M."/>
            <person name="Lucas S."/>
            <person name="Richardson P."/>
            <person name="Whitman W.B."/>
            <person name="Kyrpides N.C."/>
        </authorList>
    </citation>
    <scope>NUCLEOTIDE SEQUENCE [LARGE SCALE GENOMIC DNA]</scope>
    <source>
        <strain>ATCC 35101 / DSM 1498 / JR1</strain>
    </source>
</reference>
<organism>
    <name type="scientific">Methanoculleus marisnigri (strain ATCC 35101 / DSM 1498 / JR1)</name>
    <dbReference type="NCBI Taxonomy" id="368407"/>
    <lineage>
        <taxon>Archaea</taxon>
        <taxon>Methanobacteriati</taxon>
        <taxon>Methanobacteriota</taxon>
        <taxon>Stenosarchaea group</taxon>
        <taxon>Methanomicrobia</taxon>
        <taxon>Methanomicrobiales</taxon>
        <taxon>Methanomicrobiaceae</taxon>
        <taxon>Methanoculleus</taxon>
    </lineage>
</organism>
<gene>
    <name evidence="1" type="primary">ilvC</name>
    <name type="ordered locus">Memar_2172</name>
</gene>
<keyword id="KW-0028">Amino-acid biosynthesis</keyword>
<keyword id="KW-0100">Branched-chain amino acid biosynthesis</keyword>
<keyword id="KW-0460">Magnesium</keyword>
<keyword id="KW-0479">Metal-binding</keyword>
<keyword id="KW-0521">NADP</keyword>
<keyword id="KW-0560">Oxidoreductase</keyword>
<feature type="chain" id="PRO_1000050532" description="Ketol-acid reductoisomerase (NADP(+))">
    <location>
        <begin position="1"/>
        <end position="329"/>
    </location>
</feature>
<feature type="domain" description="KARI N-terminal Rossmann" evidence="2">
    <location>
        <begin position="2"/>
        <end position="181"/>
    </location>
</feature>
<feature type="domain" description="KARI C-terminal knotted" evidence="3">
    <location>
        <begin position="182"/>
        <end position="327"/>
    </location>
</feature>
<feature type="active site" evidence="1">
    <location>
        <position position="107"/>
    </location>
</feature>
<feature type="binding site" evidence="1">
    <location>
        <begin position="25"/>
        <end position="28"/>
    </location>
    <ligand>
        <name>NADP(+)</name>
        <dbReference type="ChEBI" id="CHEBI:58349"/>
    </ligand>
</feature>
<feature type="binding site" evidence="1">
    <location>
        <position position="48"/>
    </location>
    <ligand>
        <name>NADP(+)</name>
        <dbReference type="ChEBI" id="CHEBI:58349"/>
    </ligand>
</feature>
<feature type="binding site" evidence="1">
    <location>
        <position position="52"/>
    </location>
    <ligand>
        <name>NADP(+)</name>
        <dbReference type="ChEBI" id="CHEBI:58349"/>
    </ligand>
</feature>
<feature type="binding site" evidence="1">
    <location>
        <begin position="82"/>
        <end position="85"/>
    </location>
    <ligand>
        <name>NADP(+)</name>
        <dbReference type="ChEBI" id="CHEBI:58349"/>
    </ligand>
</feature>
<feature type="binding site" evidence="1">
    <location>
        <position position="133"/>
    </location>
    <ligand>
        <name>NADP(+)</name>
        <dbReference type="ChEBI" id="CHEBI:58349"/>
    </ligand>
</feature>
<feature type="binding site" evidence="1">
    <location>
        <position position="190"/>
    </location>
    <ligand>
        <name>Mg(2+)</name>
        <dbReference type="ChEBI" id="CHEBI:18420"/>
        <label>1</label>
    </ligand>
</feature>
<feature type="binding site" evidence="1">
    <location>
        <position position="190"/>
    </location>
    <ligand>
        <name>Mg(2+)</name>
        <dbReference type="ChEBI" id="CHEBI:18420"/>
        <label>2</label>
    </ligand>
</feature>
<feature type="binding site" evidence="1">
    <location>
        <position position="194"/>
    </location>
    <ligand>
        <name>Mg(2+)</name>
        <dbReference type="ChEBI" id="CHEBI:18420"/>
        <label>1</label>
    </ligand>
</feature>
<feature type="binding site" evidence="1">
    <location>
        <position position="226"/>
    </location>
    <ligand>
        <name>Mg(2+)</name>
        <dbReference type="ChEBI" id="CHEBI:18420"/>
        <label>2</label>
    </ligand>
</feature>
<feature type="binding site" evidence="1">
    <location>
        <position position="230"/>
    </location>
    <ligand>
        <name>Mg(2+)</name>
        <dbReference type="ChEBI" id="CHEBI:18420"/>
        <label>2</label>
    </ligand>
</feature>
<feature type="binding site" evidence="1">
    <location>
        <position position="251"/>
    </location>
    <ligand>
        <name>substrate</name>
    </ligand>
</feature>
<dbReference type="EC" id="1.1.1.86" evidence="1"/>
<dbReference type="EMBL" id="CP000562">
    <property type="protein sequence ID" value="ABN58095.1"/>
    <property type="molecule type" value="Genomic_DNA"/>
</dbReference>
<dbReference type="RefSeq" id="WP_011845004.1">
    <property type="nucleotide sequence ID" value="NC_009051.1"/>
</dbReference>
<dbReference type="SMR" id="A3CXJ5"/>
<dbReference type="STRING" id="368407.Memar_2172"/>
<dbReference type="GeneID" id="4846363"/>
<dbReference type="GeneID" id="76730255"/>
<dbReference type="KEGG" id="mem:Memar_2172"/>
<dbReference type="eggNOG" id="arCOG04465">
    <property type="taxonomic scope" value="Archaea"/>
</dbReference>
<dbReference type="HOGENOM" id="CLU_033821_0_1_2"/>
<dbReference type="UniPathway" id="UPA00047">
    <property type="reaction ID" value="UER00056"/>
</dbReference>
<dbReference type="UniPathway" id="UPA00049">
    <property type="reaction ID" value="UER00060"/>
</dbReference>
<dbReference type="Proteomes" id="UP000002146">
    <property type="component" value="Chromosome"/>
</dbReference>
<dbReference type="GO" id="GO:0004455">
    <property type="term" value="F:ketol-acid reductoisomerase activity"/>
    <property type="evidence" value="ECO:0007669"/>
    <property type="project" value="UniProtKB-UniRule"/>
</dbReference>
<dbReference type="GO" id="GO:0000287">
    <property type="term" value="F:magnesium ion binding"/>
    <property type="evidence" value="ECO:0007669"/>
    <property type="project" value="UniProtKB-UniRule"/>
</dbReference>
<dbReference type="GO" id="GO:0050661">
    <property type="term" value="F:NADP binding"/>
    <property type="evidence" value="ECO:0007669"/>
    <property type="project" value="InterPro"/>
</dbReference>
<dbReference type="GO" id="GO:0009097">
    <property type="term" value="P:isoleucine biosynthetic process"/>
    <property type="evidence" value="ECO:0007669"/>
    <property type="project" value="UniProtKB-UniRule"/>
</dbReference>
<dbReference type="GO" id="GO:0009099">
    <property type="term" value="P:L-valine biosynthetic process"/>
    <property type="evidence" value="ECO:0007669"/>
    <property type="project" value="UniProtKB-UniRule"/>
</dbReference>
<dbReference type="FunFam" id="3.40.50.720:FF:000023">
    <property type="entry name" value="Ketol-acid reductoisomerase (NADP(+))"/>
    <property type="match status" value="1"/>
</dbReference>
<dbReference type="Gene3D" id="6.10.240.10">
    <property type="match status" value="1"/>
</dbReference>
<dbReference type="Gene3D" id="3.40.50.720">
    <property type="entry name" value="NAD(P)-binding Rossmann-like Domain"/>
    <property type="match status" value="1"/>
</dbReference>
<dbReference type="HAMAP" id="MF_00435">
    <property type="entry name" value="IlvC"/>
    <property type="match status" value="1"/>
</dbReference>
<dbReference type="InterPro" id="IPR008927">
    <property type="entry name" value="6-PGluconate_DH-like_C_sf"/>
</dbReference>
<dbReference type="InterPro" id="IPR013023">
    <property type="entry name" value="KARI"/>
</dbReference>
<dbReference type="InterPro" id="IPR000506">
    <property type="entry name" value="KARI_C"/>
</dbReference>
<dbReference type="InterPro" id="IPR013116">
    <property type="entry name" value="KARI_N"/>
</dbReference>
<dbReference type="InterPro" id="IPR014359">
    <property type="entry name" value="KARI_prok"/>
</dbReference>
<dbReference type="InterPro" id="IPR036291">
    <property type="entry name" value="NAD(P)-bd_dom_sf"/>
</dbReference>
<dbReference type="NCBIfam" id="TIGR00465">
    <property type="entry name" value="ilvC"/>
    <property type="match status" value="1"/>
</dbReference>
<dbReference type="NCBIfam" id="NF004017">
    <property type="entry name" value="PRK05479.1"/>
    <property type="match status" value="1"/>
</dbReference>
<dbReference type="NCBIfam" id="NF009940">
    <property type="entry name" value="PRK13403.1"/>
    <property type="match status" value="1"/>
</dbReference>
<dbReference type="PANTHER" id="PTHR21371">
    <property type="entry name" value="KETOL-ACID REDUCTOISOMERASE, MITOCHONDRIAL"/>
    <property type="match status" value="1"/>
</dbReference>
<dbReference type="PANTHER" id="PTHR21371:SF1">
    <property type="entry name" value="KETOL-ACID REDUCTOISOMERASE, MITOCHONDRIAL"/>
    <property type="match status" value="1"/>
</dbReference>
<dbReference type="Pfam" id="PF01450">
    <property type="entry name" value="KARI_C"/>
    <property type="match status" value="1"/>
</dbReference>
<dbReference type="Pfam" id="PF07991">
    <property type="entry name" value="KARI_N"/>
    <property type="match status" value="1"/>
</dbReference>
<dbReference type="PIRSF" id="PIRSF000116">
    <property type="entry name" value="IlvC_gammaproteo"/>
    <property type="match status" value="1"/>
</dbReference>
<dbReference type="SUPFAM" id="SSF48179">
    <property type="entry name" value="6-phosphogluconate dehydrogenase C-terminal domain-like"/>
    <property type="match status" value="1"/>
</dbReference>
<dbReference type="SUPFAM" id="SSF51735">
    <property type="entry name" value="NAD(P)-binding Rossmann-fold domains"/>
    <property type="match status" value="1"/>
</dbReference>
<dbReference type="PROSITE" id="PS51851">
    <property type="entry name" value="KARI_C"/>
    <property type="match status" value="1"/>
</dbReference>
<dbReference type="PROSITE" id="PS51850">
    <property type="entry name" value="KARI_N"/>
    <property type="match status" value="1"/>
</dbReference>
<accession>A3CXJ5</accession>
<sequence length="329" mass="36253">MVQKYYESDADPRTLEDKTIAVIGYGSQGRGQALNLRDSGCRVVIGLRPGGSWQKASEDGFEVYSVAEAVKRADVIQILLPDENQAAVYRAEISPNIRENACLMFSHGFNIHYGQIVPPPTVDVVMVAPKGPGHMVRRTYEEGKGVPALIAVHQDATGQARAIALAYARGIGATRAVVFETTFAEETETDLFGEQAVLCGGITSLIKAGFETLVDAGYAPEMAYLEVLHETKLIVDLIYEGGFTKMRDSISNTAQYGDLTRGPRVIGPETYMAMQEILEEIQNGKFAKEWMLENMVNRPVFNALTRADEEHLIEQVGAEIRGFMPQFRK</sequence>
<evidence type="ECO:0000255" key="1">
    <source>
        <dbReference type="HAMAP-Rule" id="MF_00435"/>
    </source>
</evidence>
<evidence type="ECO:0000255" key="2">
    <source>
        <dbReference type="PROSITE-ProRule" id="PRU01197"/>
    </source>
</evidence>
<evidence type="ECO:0000255" key="3">
    <source>
        <dbReference type="PROSITE-ProRule" id="PRU01198"/>
    </source>
</evidence>